<organism>
    <name type="scientific">Cycas taitungensis</name>
    <name type="common">Prince sago</name>
    <name type="synonym">Cycas taiwaniana</name>
    <dbReference type="NCBI Taxonomy" id="54799"/>
    <lineage>
        <taxon>Eukaryota</taxon>
        <taxon>Viridiplantae</taxon>
        <taxon>Streptophyta</taxon>
        <taxon>Embryophyta</taxon>
        <taxon>Tracheophyta</taxon>
        <taxon>Spermatophyta</taxon>
        <taxon>Cycadidae</taxon>
        <taxon>Cycadales</taxon>
        <taxon>Cycadaceae</taxon>
        <taxon>Cycas</taxon>
    </lineage>
</organism>
<feature type="chain" id="PRO_0000354254" description="Small ribosomal subunit protein uS15c">
    <location>
        <begin position="1"/>
        <end position="88"/>
    </location>
</feature>
<sequence length="88" mass="10714">MPKNSPIRSSLILKERRRSVESQIYHLTDRILRLTHHLELHRRDYSSQRGLWQILGKRKRLLVYLSKRNRPRYEDLIGQLSIRGLKIR</sequence>
<gene>
    <name type="primary">rps15</name>
</gene>
<keyword id="KW-0150">Chloroplast</keyword>
<keyword id="KW-0934">Plastid</keyword>
<keyword id="KW-0687">Ribonucleoprotein</keyword>
<keyword id="KW-0689">Ribosomal protein</keyword>
<evidence type="ECO:0000250" key="1"/>
<evidence type="ECO:0000305" key="2"/>
<dbReference type="EMBL" id="AP009339">
    <property type="protein sequence ID" value="BAF65015.1"/>
    <property type="molecule type" value="Genomic_DNA"/>
</dbReference>
<dbReference type="RefSeq" id="YP_001312273.1">
    <property type="nucleotide sequence ID" value="NC_009618.1"/>
</dbReference>
<dbReference type="SMR" id="A6H5P9"/>
<dbReference type="GeneID" id="5309484"/>
<dbReference type="GO" id="GO:0009507">
    <property type="term" value="C:chloroplast"/>
    <property type="evidence" value="ECO:0007669"/>
    <property type="project" value="UniProtKB-SubCell"/>
</dbReference>
<dbReference type="GO" id="GO:1990904">
    <property type="term" value="C:ribonucleoprotein complex"/>
    <property type="evidence" value="ECO:0007669"/>
    <property type="project" value="UniProtKB-KW"/>
</dbReference>
<dbReference type="GO" id="GO:0005840">
    <property type="term" value="C:ribosome"/>
    <property type="evidence" value="ECO:0007669"/>
    <property type="project" value="UniProtKB-KW"/>
</dbReference>
<dbReference type="GO" id="GO:0003735">
    <property type="term" value="F:structural constituent of ribosome"/>
    <property type="evidence" value="ECO:0007669"/>
    <property type="project" value="InterPro"/>
</dbReference>
<dbReference type="GO" id="GO:0006412">
    <property type="term" value="P:translation"/>
    <property type="evidence" value="ECO:0007669"/>
    <property type="project" value="UniProtKB-UniRule"/>
</dbReference>
<dbReference type="CDD" id="cd00677">
    <property type="entry name" value="S15_NS1_EPRS_RNA-bind"/>
    <property type="match status" value="1"/>
</dbReference>
<dbReference type="Gene3D" id="1.10.287.10">
    <property type="entry name" value="S15/NS1, RNA-binding"/>
    <property type="match status" value="1"/>
</dbReference>
<dbReference type="HAMAP" id="MF_01343_B">
    <property type="entry name" value="Ribosomal_uS15_B"/>
    <property type="match status" value="1"/>
</dbReference>
<dbReference type="InterPro" id="IPR000589">
    <property type="entry name" value="Ribosomal_uS15"/>
</dbReference>
<dbReference type="InterPro" id="IPR005290">
    <property type="entry name" value="Ribosomal_uS15_bac-type"/>
</dbReference>
<dbReference type="InterPro" id="IPR009068">
    <property type="entry name" value="uS15_NS1_RNA-bd_sf"/>
</dbReference>
<dbReference type="NCBIfam" id="TIGR00952">
    <property type="entry name" value="S15_bact"/>
    <property type="match status" value="1"/>
</dbReference>
<dbReference type="PANTHER" id="PTHR23321">
    <property type="entry name" value="RIBOSOMAL PROTEIN S15, BACTERIAL AND ORGANELLAR"/>
    <property type="match status" value="1"/>
</dbReference>
<dbReference type="PANTHER" id="PTHR23321:SF26">
    <property type="entry name" value="SMALL RIBOSOMAL SUBUNIT PROTEIN US15M"/>
    <property type="match status" value="1"/>
</dbReference>
<dbReference type="Pfam" id="PF00312">
    <property type="entry name" value="Ribosomal_S15"/>
    <property type="match status" value="1"/>
</dbReference>
<dbReference type="SMART" id="SM01387">
    <property type="entry name" value="Ribosomal_S15"/>
    <property type="match status" value="1"/>
</dbReference>
<dbReference type="SUPFAM" id="SSF47060">
    <property type="entry name" value="S15/NS1 RNA-binding domain"/>
    <property type="match status" value="1"/>
</dbReference>
<dbReference type="PROSITE" id="PS00362">
    <property type="entry name" value="RIBOSOMAL_S15"/>
    <property type="match status" value="1"/>
</dbReference>
<geneLocation type="chloroplast"/>
<protein>
    <recommendedName>
        <fullName evidence="2">Small ribosomal subunit protein uS15c</fullName>
    </recommendedName>
    <alternativeName>
        <fullName>30S ribosomal protein S15, chloroplastic</fullName>
    </alternativeName>
</protein>
<reference key="1">
    <citation type="journal article" date="2007" name="Mol. Biol. Evol.">
        <title>Chloroplast genome (cpDNA) of Cycas taitungensis and 56 cp protein-coding genes of Gnetum parvifolium: insights into cpDNA evolution and phylogeny of extant seed plants.</title>
        <authorList>
            <person name="Wu C.-S."/>
            <person name="Wang Y.-N."/>
            <person name="Liu S.-M."/>
            <person name="Chaw S.-M."/>
        </authorList>
    </citation>
    <scope>NUCLEOTIDE SEQUENCE [LARGE SCALE GENOMIC DNA]</scope>
</reference>
<comment type="subunit">
    <text evidence="1">Part of the 30S ribosomal subunit.</text>
</comment>
<comment type="subcellular location">
    <subcellularLocation>
        <location>Plastid</location>
        <location>Chloroplast</location>
    </subcellularLocation>
</comment>
<comment type="similarity">
    <text evidence="2">Belongs to the universal ribosomal protein uS15 family.</text>
</comment>
<proteinExistence type="inferred from homology"/>
<accession>A6H5P9</accession>
<name>RR15_CYCTA</name>